<name>DPOL_BPPRD</name>
<evidence type="ECO:0000250" key="1">
    <source>
        <dbReference type="UniProtKB" id="P04415"/>
    </source>
</evidence>
<evidence type="ECO:0000305" key="2"/>
<proteinExistence type="inferred from homology"/>
<keyword id="KW-0235">DNA replication</keyword>
<keyword id="KW-0238">DNA-binding</keyword>
<keyword id="KW-0239">DNA-directed DNA polymerase</keyword>
<keyword id="KW-0269">Exonuclease</keyword>
<keyword id="KW-0378">Hydrolase</keyword>
<keyword id="KW-0511">Multifunctional enzyme</keyword>
<keyword id="KW-0540">Nuclease</keyword>
<keyword id="KW-0548">Nucleotidyltransferase</keyword>
<keyword id="KW-1185">Reference proteome</keyword>
<keyword id="KW-0808">Transferase</keyword>
<keyword id="KW-1194">Viral DNA replication</keyword>
<dbReference type="EC" id="2.7.7.7"/>
<dbReference type="EC" id="3.1.11.-" evidence="1"/>
<dbReference type="EMBL" id="J03018">
    <property type="protein sequence ID" value="AAA32452.1"/>
    <property type="molecule type" value="Genomic_DNA"/>
</dbReference>
<dbReference type="EMBL" id="M22161">
    <property type="protein sequence ID" value="AAA32450.1"/>
    <property type="molecule type" value="Genomic_DNA"/>
</dbReference>
<dbReference type="EMBL" id="AY848689">
    <property type="protein sequence ID" value="AAX45903.1"/>
    <property type="molecule type" value="Genomic_DNA"/>
</dbReference>
<dbReference type="EMBL" id="X06321">
    <property type="protein sequence ID" value="CAA29637.1"/>
    <property type="molecule type" value="Genomic_DNA"/>
</dbReference>
<dbReference type="PIR" id="B27328">
    <property type="entry name" value="DJBPD1"/>
</dbReference>
<dbReference type="RefSeq" id="NP_040682.1">
    <property type="nucleotide sequence ID" value="NC_001421.2"/>
</dbReference>
<dbReference type="RefSeq" id="YP_009639956.1">
    <property type="nucleotide sequence ID" value="NC_001421.2"/>
</dbReference>
<dbReference type="SMR" id="P10479"/>
<dbReference type="GeneID" id="1260934"/>
<dbReference type="OrthoDB" id="9703at10239"/>
<dbReference type="Proteomes" id="UP000002143">
    <property type="component" value="Segment"/>
</dbReference>
<dbReference type="GO" id="GO:0003677">
    <property type="term" value="F:DNA binding"/>
    <property type="evidence" value="ECO:0007669"/>
    <property type="project" value="UniProtKB-KW"/>
</dbReference>
<dbReference type="GO" id="GO:0003887">
    <property type="term" value="F:DNA-directed DNA polymerase activity"/>
    <property type="evidence" value="ECO:0000314"/>
    <property type="project" value="CACAO"/>
</dbReference>
<dbReference type="GO" id="GO:0004527">
    <property type="term" value="F:exonuclease activity"/>
    <property type="evidence" value="ECO:0007669"/>
    <property type="project" value="UniProtKB-KW"/>
</dbReference>
<dbReference type="GO" id="GO:0000166">
    <property type="term" value="F:nucleotide binding"/>
    <property type="evidence" value="ECO:0007669"/>
    <property type="project" value="InterPro"/>
</dbReference>
<dbReference type="GO" id="GO:0006260">
    <property type="term" value="P:DNA replication"/>
    <property type="evidence" value="ECO:0007669"/>
    <property type="project" value="UniProtKB-KW"/>
</dbReference>
<dbReference type="GO" id="GO:0039693">
    <property type="term" value="P:viral DNA genome replication"/>
    <property type="evidence" value="ECO:0007669"/>
    <property type="project" value="UniProtKB-KW"/>
</dbReference>
<dbReference type="FunFam" id="3.90.1600.10:FF:000048">
    <property type="entry name" value="DNA-directed DNA polymerase"/>
    <property type="match status" value="1"/>
</dbReference>
<dbReference type="Gene3D" id="3.90.1600.10">
    <property type="entry name" value="Palm domain of DNA polymerase"/>
    <property type="match status" value="2"/>
</dbReference>
<dbReference type="Gene3D" id="3.30.420.10">
    <property type="entry name" value="Ribonuclease H-like superfamily/Ribonuclease H"/>
    <property type="match status" value="1"/>
</dbReference>
<dbReference type="InterPro" id="IPR006172">
    <property type="entry name" value="DNA-dir_DNA_pol_B"/>
</dbReference>
<dbReference type="InterPro" id="IPR004868">
    <property type="entry name" value="DNA-dir_DNA_pol_B_mt/vir"/>
</dbReference>
<dbReference type="InterPro" id="IPR043502">
    <property type="entry name" value="DNA/RNA_pol_sf"/>
</dbReference>
<dbReference type="InterPro" id="IPR023211">
    <property type="entry name" value="DNA_pol_palm_dom_sf"/>
</dbReference>
<dbReference type="InterPro" id="IPR012337">
    <property type="entry name" value="RNaseH-like_sf"/>
</dbReference>
<dbReference type="InterPro" id="IPR036397">
    <property type="entry name" value="RNaseH_sf"/>
</dbReference>
<dbReference type="PANTHER" id="PTHR33568">
    <property type="entry name" value="DNA POLYMERASE"/>
    <property type="match status" value="1"/>
</dbReference>
<dbReference type="PANTHER" id="PTHR33568:SF3">
    <property type="entry name" value="DNA-DIRECTED DNA POLYMERASE"/>
    <property type="match status" value="1"/>
</dbReference>
<dbReference type="Pfam" id="PF03175">
    <property type="entry name" value="DNA_pol_B_2"/>
    <property type="match status" value="1"/>
</dbReference>
<dbReference type="PRINTS" id="PR00106">
    <property type="entry name" value="DNAPOLB"/>
</dbReference>
<dbReference type="SMART" id="SM00486">
    <property type="entry name" value="POLBc"/>
    <property type="match status" value="1"/>
</dbReference>
<dbReference type="SUPFAM" id="SSF56672">
    <property type="entry name" value="DNA/RNA polymerases"/>
    <property type="match status" value="1"/>
</dbReference>
<dbReference type="SUPFAM" id="SSF53098">
    <property type="entry name" value="Ribonuclease H-like"/>
    <property type="match status" value="1"/>
</dbReference>
<dbReference type="PROSITE" id="PS00116">
    <property type="entry name" value="DNA_POLYMERASE_B"/>
    <property type="match status" value="1"/>
</dbReference>
<reference key="1">
    <citation type="journal article" date="1987" name="Proc. Natl. Acad. Sci. U.S.A.">
        <title>Bacteriophage PRD1 DNA polymerase: evolution of DNA polymerases.</title>
        <authorList>
            <person name="Jung G."/>
            <person name="Leavitt M.C."/>
            <person name="Hsieh J.-C."/>
            <person name="Ito J."/>
        </authorList>
    </citation>
    <scope>NUCLEOTIDE SEQUENCE [GENOMIC DNA]</scope>
</reference>
<reference key="2">
    <citation type="journal article" date="1987" name="Gene">
        <title>The complete nucleotide sequence of the left very early region of Escherichia coli bacteriophage PRD1 coding for the terminal protein and the DNA polymerase.</title>
        <authorList>
            <person name="Savilahti H."/>
            <person name="Bamford D.H."/>
        </authorList>
    </citation>
    <scope>NUCLEOTIDE SEQUENCE [GENOMIC DNA]</scope>
</reference>
<reference key="3">
    <citation type="journal article" date="1991" name="Virology">
        <title>Genome organization of membrane-containing bacteriophage PRD1.</title>
        <authorList>
            <person name="Bamford J.K.H."/>
            <person name="Haenninen A.-L."/>
            <person name="Pakula T.M."/>
            <person name="Ojala P.M."/>
            <person name="Kalkkinen N."/>
            <person name="Frilander M."/>
            <person name="Bamford D.H."/>
        </authorList>
    </citation>
    <scope>NUCLEOTIDE SEQUENCE [GENOMIC DNA]</scope>
</reference>
<reference key="4">
    <citation type="journal article" date="2005" name="J. Mol. Biol.">
        <title>A snapshot of viral evolution from genome analysis of the tectiviridae family.</title>
        <authorList>
            <person name="Saren A.M."/>
            <person name="Ravantti J.J."/>
            <person name="Benson S.D."/>
            <person name="Burnett R.M."/>
            <person name="Paulin L."/>
            <person name="Bamford D.H."/>
            <person name="Bamford J.K.H."/>
        </authorList>
    </citation>
    <scope>NUCLEOTIDE SEQUENCE [GENOMIC DNA]</scope>
</reference>
<reference key="5">
    <citation type="journal article" date="1987" name="Nucleic Acids Res.">
        <title>Primary structure of the DNA terminal protein of bacteriophage PRD1.</title>
        <authorList>
            <person name="Hsieh J.-C."/>
            <person name="Jung G."/>
            <person name="Leavitt M.C."/>
            <person name="Ito J."/>
        </authorList>
    </citation>
    <scope>NUCLEOTIDE SEQUENCE [GENOMIC DNA] OF 1-9</scope>
</reference>
<reference key="6">
    <citation type="journal article" date="1990" name="Biochem. Biophys. Res. Commun.">
        <title>Site-specific mutagenesis of PRD1 DNA polymerase: mutations in highly conserved regions of the family B DNA polymerase.</title>
        <authorList>
            <person name="Jung G."/>
            <person name="Leavitt M.C."/>
            <person name="Schultz M."/>
            <person name="Ito J."/>
        </authorList>
    </citation>
    <scope>MUTAGENESIS</scope>
</reference>
<organism>
    <name type="scientific">Enterobacteria phage PRD1</name>
    <name type="common">Bacteriophage PRD1</name>
    <dbReference type="NCBI Taxonomy" id="10658"/>
    <lineage>
        <taxon>Viruses</taxon>
        <taxon>Varidnaviria</taxon>
        <taxon>Bamfordvirae</taxon>
        <taxon>Preplasmiviricota</taxon>
        <taxon>Tectiliviricetes</taxon>
        <taxon>Kalamavirales</taxon>
        <taxon>Tectiviridae</taxon>
        <taxon>Alphatectivirus</taxon>
        <taxon>Alphatectivirus PRD1</taxon>
    </lineage>
</organism>
<gene>
    <name type="primary">I</name>
</gene>
<protein>
    <recommendedName>
        <fullName>DNA-directed DNA polymerase</fullName>
        <ecNumber>2.7.7.7</ecNumber>
        <ecNumber evidence="1">3.1.11.-</ecNumber>
    </recommendedName>
    <alternativeName>
        <fullName>Protein P1</fullName>
    </alternativeName>
</protein>
<accession>P10479</accession>
<accession>Q3T4P4</accession>
<comment type="function">
    <text evidence="1">Replicates the viral genomic DNA. This polymerase possesses two enzymatic activities: DNA synthesis (polymerase) and an exonucleolytic activity that degrades single-stranded DNA in the 3'- to 5'-direction for proofreading purpose.</text>
</comment>
<comment type="catalytic activity">
    <reaction>
        <text>DNA(n) + a 2'-deoxyribonucleoside 5'-triphosphate = DNA(n+1) + diphosphate</text>
        <dbReference type="Rhea" id="RHEA:22508"/>
        <dbReference type="Rhea" id="RHEA-COMP:17339"/>
        <dbReference type="Rhea" id="RHEA-COMP:17340"/>
        <dbReference type="ChEBI" id="CHEBI:33019"/>
        <dbReference type="ChEBI" id="CHEBI:61560"/>
        <dbReference type="ChEBI" id="CHEBI:173112"/>
        <dbReference type="EC" id="2.7.7.7"/>
    </reaction>
</comment>
<comment type="domain">
    <text>The N-terminus contains the 3'-5' exonuclease activity and the C-terminus contains the polymerase activity.</text>
</comment>
<comment type="miscellaneous">
    <text>This DNA polymerase requires a protein as a primer.</text>
</comment>
<comment type="similarity">
    <text evidence="2">Belongs to the DNA polymerase type-B family.</text>
</comment>
<feature type="chain" id="PRO_0000046545" description="DNA-directed DNA polymerase">
    <location>
        <begin position="1"/>
        <end position="553"/>
    </location>
</feature>
<sequence length="553" mass="63336">MPRRSRKKVEYKIAAFDFETDPFKHDRIPKPFSWGFYNGEIYKDYWGDDCIEQFIYWLDTIEEPHVIYAHNGGKFDFLFLMKYFRGKLKIVNGRILEVEHGIHKFRDSYAILPVPLAASDEKIEIDYGKMERETREQHKAEILEYLKGDCVTLHKMVSLFIAEFGMRLTIGGTAMNELKQFHPYDPVRKGFDEAMRPFYFGGRCQAFEKGIIEDDIKVYDVNSMYPHAMRNFRHPFSDEFYEANEITEETYFIEWEGENNGAVPVRTKTGLDFNQRSGIFHTSIHEWRAGIDTGTIKPNRIIRTINFTETTTFGAFIDHFFSKRDAAKKAGDLFHNIFYKLILNSSYGKFAQNPENYKEWCITEGGIYLEGYDGEGCEVQEHLDYILWGRPAEMFNYFNVAVAASITGAARSVLLRALAQAERPLYCDTDSIICRDLKNVPLDAYQLGAWDLEATGDKIAIAGKKLYALYAGDNCVKIASKGASLVPRDIGFLMPPDMEPKAAKKVAQQKAKNIGGEKILKVANGGVYDFVNDAPSFKLNGNVQFIKRTIKGT</sequence>
<organismHost>
    <name type="scientific">Acinetobacter calcoaceticus</name>
    <dbReference type="NCBI Taxonomy" id="471"/>
</organismHost>
<organismHost>
    <name type="scientific">Escherichia coli</name>
    <dbReference type="NCBI Taxonomy" id="562"/>
</organismHost>
<organismHost>
    <name type="scientific">Proteus mirabilis</name>
    <dbReference type="NCBI Taxonomy" id="584"/>
</organismHost>
<organismHost>
    <name type="scientific">Pseudomonas aeruginosa</name>
    <dbReference type="NCBI Taxonomy" id="287"/>
</organismHost>
<organismHost>
    <name type="scientific">Pseudomonas fluorescens</name>
    <dbReference type="NCBI Taxonomy" id="294"/>
</organismHost>
<organismHost>
    <name type="scientific">Pseudomonas putida</name>
    <name type="common">Arthrobacter siderocapsulatus</name>
    <dbReference type="NCBI Taxonomy" id="303"/>
</organismHost>
<organismHost>
    <name type="scientific">Salmonella typhimurium</name>
    <dbReference type="NCBI Taxonomy" id="90371"/>
</organismHost>
<organismHost>
    <name type="scientific">Vibrio cholerae</name>
    <dbReference type="NCBI Taxonomy" id="666"/>
</organismHost>